<dbReference type="EMBL" id="AF291703">
    <property type="protein sequence ID" value="AAG22532.1"/>
    <property type="molecule type" value="Genomic_RNA"/>
</dbReference>
<dbReference type="EMBL" id="MN095801">
    <property type="protein sequence ID" value="QDI78308.1"/>
    <property type="molecule type" value="Viral_cRNA"/>
</dbReference>
<dbReference type="EMBL" id="MN095804">
    <property type="protein sequence ID" value="QDI78311.1"/>
    <property type="molecule type" value="Viral_cRNA"/>
</dbReference>
<dbReference type="EMBL" id="AF324901">
    <property type="protein sequence ID" value="AAK14322.1"/>
    <property type="molecule type" value="Viral_cRNA"/>
</dbReference>
<dbReference type="EMBL" id="MT956623">
    <property type="protein sequence ID" value="QRY27109.1"/>
    <property type="molecule type" value="Viral_cRNA"/>
</dbReference>
<dbReference type="PDB" id="2K9H">
    <property type="method" value="NMR"/>
    <property type="chains" value="A=543-599"/>
</dbReference>
<dbReference type="PDB" id="6Y5F">
    <property type="method" value="X-ray"/>
    <property type="resolution" value="3.20 A"/>
    <property type="chains" value="A/B=21-374, A/B=652-1107"/>
</dbReference>
<dbReference type="PDB" id="6Y5W">
    <property type="method" value="X-ray"/>
    <property type="resolution" value="2.55 A"/>
    <property type="chains" value="A/B=21-374, A/B=652-1107"/>
</dbReference>
<dbReference type="PDB" id="6Y6Q">
    <property type="method" value="X-ray"/>
    <property type="resolution" value="2.70 A"/>
    <property type="chains" value="A=652-1107"/>
</dbReference>
<dbReference type="PDB" id="6YRB">
    <property type="method" value="X-ray"/>
    <property type="resolution" value="2.35 A"/>
    <property type="chains" value="A/B=375-484"/>
</dbReference>
<dbReference type="PDB" id="6YRQ">
    <property type="method" value="X-ray"/>
    <property type="resolution" value="1.90 A"/>
    <property type="chains" value="A/B/C/D=375-484"/>
</dbReference>
<dbReference type="PDB" id="6ZJM">
    <property type="method" value="EM"/>
    <property type="resolution" value="11.40 A"/>
    <property type="chains" value="A/B/C/D/E/F/G/H=21-1107"/>
</dbReference>
<dbReference type="PDB" id="8DBZ">
    <property type="method" value="EM"/>
    <property type="resolution" value="4.10 A"/>
    <property type="chains" value="A=22-374"/>
</dbReference>
<dbReference type="PDBsum" id="2K9H"/>
<dbReference type="PDBsum" id="6Y5F"/>
<dbReference type="PDBsum" id="6Y5W"/>
<dbReference type="PDBsum" id="6Y6Q"/>
<dbReference type="PDBsum" id="6YRB"/>
<dbReference type="PDBsum" id="6YRQ"/>
<dbReference type="PDBsum" id="6ZJM"/>
<dbReference type="PDBsum" id="8DBZ"/>
<dbReference type="EMDB" id="EMD-27318"/>
<dbReference type="SMR" id="Q9E006"/>
<dbReference type="GlyCosmos" id="Q9E006">
    <property type="glycosylation" value="4 sites, No reported glycans"/>
</dbReference>
<dbReference type="KEGG" id="vg:991233"/>
<dbReference type="EvolutionaryTrace" id="Q9E006"/>
<dbReference type="GO" id="GO:0044167">
    <property type="term" value="C:host cell endoplasmic reticulum membrane"/>
    <property type="evidence" value="ECO:0007669"/>
    <property type="project" value="UniProtKB-SubCell"/>
</dbReference>
<dbReference type="GO" id="GO:0044178">
    <property type="term" value="C:host cell Golgi membrane"/>
    <property type="evidence" value="ECO:0007669"/>
    <property type="project" value="UniProtKB-SubCell"/>
</dbReference>
<dbReference type="GO" id="GO:0033650">
    <property type="term" value="C:host cell mitochondrion"/>
    <property type="evidence" value="ECO:0007669"/>
    <property type="project" value="UniProtKB-SubCell"/>
</dbReference>
<dbReference type="GO" id="GO:0044228">
    <property type="term" value="C:host cell surface"/>
    <property type="evidence" value="ECO:0007669"/>
    <property type="project" value="UniProtKB-SubCell"/>
</dbReference>
<dbReference type="GO" id="GO:0016020">
    <property type="term" value="C:membrane"/>
    <property type="evidence" value="ECO:0007669"/>
    <property type="project" value="UniProtKB-KW"/>
</dbReference>
<dbReference type="GO" id="GO:0019031">
    <property type="term" value="C:viral envelope"/>
    <property type="evidence" value="ECO:0007669"/>
    <property type="project" value="UniProtKB-KW"/>
</dbReference>
<dbReference type="GO" id="GO:0055036">
    <property type="term" value="C:virion membrane"/>
    <property type="evidence" value="ECO:0007669"/>
    <property type="project" value="UniProtKB-SubCell"/>
</dbReference>
<dbReference type="GO" id="GO:0008270">
    <property type="term" value="F:zinc ion binding"/>
    <property type="evidence" value="ECO:0007669"/>
    <property type="project" value="UniProtKB-KW"/>
</dbReference>
<dbReference type="GO" id="GO:0075509">
    <property type="term" value="P:endocytosis involved in viral entry into host cell"/>
    <property type="evidence" value="ECO:0007669"/>
    <property type="project" value="UniProtKB-KW"/>
</dbReference>
<dbReference type="GO" id="GO:0039654">
    <property type="term" value="P:fusion of virus membrane with host endosome membrane"/>
    <property type="evidence" value="ECO:0007669"/>
    <property type="project" value="UniProtKB-KW"/>
</dbReference>
<dbReference type="GO" id="GO:0007165">
    <property type="term" value="P:signal transduction"/>
    <property type="evidence" value="ECO:0007669"/>
    <property type="project" value="InterPro"/>
</dbReference>
<dbReference type="GO" id="GO:0039520">
    <property type="term" value="P:symbiont-mediated activation of host autophagy"/>
    <property type="evidence" value="ECO:0007669"/>
    <property type="project" value="UniProtKB-KW"/>
</dbReference>
<dbReference type="GO" id="GO:0039545">
    <property type="term" value="P:symbiont-mediated suppression of host cytoplasmic pattern recognition receptor signaling pathway via inhibition of MAVS activity"/>
    <property type="evidence" value="ECO:0007669"/>
    <property type="project" value="UniProtKB-KW"/>
</dbReference>
<dbReference type="GO" id="GO:0039527">
    <property type="term" value="P:symbiont-mediated suppression of host TRAF-mediated signal transduction"/>
    <property type="evidence" value="ECO:0000314"/>
    <property type="project" value="UniProtKB"/>
</dbReference>
<dbReference type="GO" id="GO:0019062">
    <property type="term" value="P:virion attachment to host cell"/>
    <property type="evidence" value="ECO:0007669"/>
    <property type="project" value="UniProtKB-KW"/>
</dbReference>
<dbReference type="Gene3D" id="1.10.8.1320">
    <property type="match status" value="1"/>
</dbReference>
<dbReference type="InterPro" id="IPR016402">
    <property type="entry name" value="Envelope_glycoprot_Hantavirus"/>
</dbReference>
<dbReference type="InterPro" id="IPR048791">
    <property type="entry name" value="Gc_C_bunya"/>
</dbReference>
<dbReference type="InterPro" id="IPR048790">
    <property type="entry name" value="Gn-B_hanta"/>
</dbReference>
<dbReference type="InterPro" id="IPR002532">
    <property type="entry name" value="Hanta_Gc_N"/>
</dbReference>
<dbReference type="InterPro" id="IPR002534">
    <property type="entry name" value="Hanta_Gn-H"/>
</dbReference>
<dbReference type="InterPro" id="IPR012316">
    <property type="entry name" value="ITAM_motif_hantavir-typ"/>
</dbReference>
<dbReference type="Pfam" id="PF20682">
    <property type="entry name" value="Hanta_Gc_C"/>
    <property type="match status" value="1"/>
</dbReference>
<dbReference type="Pfam" id="PF01561">
    <property type="entry name" value="Hanta_Gc_N"/>
    <property type="match status" value="1"/>
</dbReference>
<dbReference type="Pfam" id="PF20679">
    <property type="entry name" value="Hanta_Gn-B"/>
    <property type="match status" value="1"/>
</dbReference>
<dbReference type="Pfam" id="PF01567">
    <property type="entry name" value="Hanta_Gn-H"/>
    <property type="match status" value="1"/>
</dbReference>
<dbReference type="Pfam" id="PF10538">
    <property type="entry name" value="ITAM_Cys-rich"/>
    <property type="match status" value="1"/>
</dbReference>
<dbReference type="PIRSF" id="PIRSF003945">
    <property type="entry name" value="M_poly_HantaV"/>
    <property type="match status" value="1"/>
</dbReference>
<dbReference type="PROSITE" id="PS51056">
    <property type="entry name" value="ITAM_2"/>
    <property type="match status" value="1"/>
</dbReference>
<protein>
    <recommendedName>
        <fullName>Envelopment polyprotein</fullName>
    </recommendedName>
    <alternativeName>
        <fullName evidence="1">Glycoprotein precursor</fullName>
    </alternativeName>
    <alternativeName>
        <fullName>M polyprotein</fullName>
    </alternativeName>
    <component>
        <recommendedName>
            <fullName evidence="1">Glycoprotein N</fullName>
            <shortName>Gn</shortName>
        </recommendedName>
        <alternativeName>
            <fullName>Glycoprotein G1</fullName>
        </alternativeName>
    </component>
    <component>
        <recommendedName>
            <fullName evidence="1">Glycoprotein C</fullName>
            <shortName>Gc</shortName>
        </recommendedName>
        <alternativeName>
            <fullName>Glycoprotein G2</fullName>
        </alternativeName>
    </component>
</protein>
<keyword id="KW-0002">3D-structure</keyword>
<keyword id="KW-1072">Activation of host autophagy by virus</keyword>
<keyword id="KW-1015">Disulfide bond</keyword>
<keyword id="KW-1170">Fusion of virus membrane with host endosomal membrane</keyword>
<keyword id="KW-1168">Fusion of virus membrane with host membrane</keyword>
<keyword id="KW-0325">Glycoprotein</keyword>
<keyword id="KW-1038">Host endoplasmic reticulum</keyword>
<keyword id="KW-1040">Host Golgi apparatus</keyword>
<keyword id="KW-1043">Host membrane</keyword>
<keyword id="KW-1045">Host mitochondrion</keyword>
<keyword id="KW-0945">Host-virus interaction</keyword>
<keyword id="KW-1090">Inhibition of host innate immune response by virus</keyword>
<keyword id="KW-1097">Inhibition of host MAVS by virus</keyword>
<keyword id="KW-1113">Inhibition of host RLR pathway by virus</keyword>
<keyword id="KW-1110">Inhibition of host TRAFs by virus</keyword>
<keyword id="KW-0472">Membrane</keyword>
<keyword id="KW-0479">Metal-binding</keyword>
<keyword id="KW-0597">Phosphoprotein</keyword>
<keyword id="KW-0677">Repeat</keyword>
<keyword id="KW-0732">Signal</keyword>
<keyword id="KW-0812">Transmembrane</keyword>
<keyword id="KW-1133">Transmembrane helix</keyword>
<keyword id="KW-1161">Viral attachment to host cell</keyword>
<keyword id="KW-0261">Viral envelope protein</keyword>
<keyword id="KW-0899">Viral immunoevasion</keyword>
<keyword id="KW-1162">Viral penetration into host cytoplasm</keyword>
<keyword id="KW-0946">Virion</keyword>
<keyword id="KW-1164">Virus endocytosis by host</keyword>
<keyword id="KW-1160">Virus entry into host cell</keyword>
<keyword id="KW-0862">Zinc</keyword>
<keyword id="KW-0863">Zinc-finger</keyword>
<evidence type="ECO:0000250" key="1">
    <source>
        <dbReference type="UniProtKB" id="P08668"/>
    </source>
</evidence>
<evidence type="ECO:0000250" key="2">
    <source>
        <dbReference type="UniProtKB" id="P0DTJ1"/>
    </source>
</evidence>
<evidence type="ECO:0000250" key="3">
    <source>
        <dbReference type="UniProtKB" id="P27312"/>
    </source>
</evidence>
<evidence type="ECO:0000250" key="4">
    <source>
        <dbReference type="UniProtKB" id="P41266"/>
    </source>
</evidence>
<evidence type="ECO:0000250" key="5">
    <source>
        <dbReference type="UniProtKB" id="Q83887"/>
    </source>
</evidence>
<evidence type="ECO:0000255" key="6"/>
<evidence type="ECO:0000255" key="7">
    <source>
        <dbReference type="PROSITE-ProRule" id="PRU00379"/>
    </source>
</evidence>
<evidence type="ECO:0000269" key="8">
    <source>
    </source>
</evidence>
<evidence type="ECO:0000269" key="9">
    <source>
    </source>
</evidence>
<evidence type="ECO:0000269" key="10">
    <source>
    </source>
</evidence>
<evidence type="ECO:0000269" key="11">
    <source>
    </source>
</evidence>
<evidence type="ECO:0000269" key="12">
    <source>
    </source>
</evidence>
<evidence type="ECO:0000269" key="13">
    <source>
    </source>
</evidence>
<evidence type="ECO:0000269" key="14">
    <source>
    </source>
</evidence>
<evidence type="ECO:0000269" key="15">
    <source>
    </source>
</evidence>
<evidence type="ECO:0000305" key="16"/>
<evidence type="ECO:0000312" key="17">
    <source>
        <dbReference type="EMBL" id="QDI78308.1"/>
    </source>
</evidence>
<evidence type="ECO:0000312" key="18">
    <source>
        <dbReference type="EMBL" id="QDI78311.1"/>
    </source>
</evidence>
<evidence type="ECO:0000312" key="19">
    <source>
        <dbReference type="EMBL" id="QRY27109.1"/>
    </source>
</evidence>
<evidence type="ECO:0007744" key="20">
    <source>
        <dbReference type="PDB" id="2K9H"/>
    </source>
</evidence>
<evidence type="ECO:0007744" key="21">
    <source>
        <dbReference type="PDB" id="6Y5F"/>
    </source>
</evidence>
<evidence type="ECO:0007744" key="22">
    <source>
        <dbReference type="PDB" id="6Y5W"/>
    </source>
</evidence>
<evidence type="ECO:0007744" key="23">
    <source>
        <dbReference type="PDB" id="6Y6Q"/>
    </source>
</evidence>
<evidence type="ECO:0007744" key="24">
    <source>
        <dbReference type="PDB" id="6YRB"/>
    </source>
</evidence>
<evidence type="ECO:0007744" key="25">
    <source>
        <dbReference type="PDB" id="6YRQ"/>
    </source>
</evidence>
<evidence type="ECO:0007744" key="26">
    <source>
        <dbReference type="PDB" id="6ZJM"/>
    </source>
</evidence>
<evidence type="ECO:0007829" key="27">
    <source>
        <dbReference type="PDB" id="2K9H"/>
    </source>
</evidence>
<evidence type="ECO:0007829" key="28">
    <source>
        <dbReference type="PDB" id="6Y5F"/>
    </source>
</evidence>
<evidence type="ECO:0007829" key="29">
    <source>
        <dbReference type="PDB" id="6Y5W"/>
    </source>
</evidence>
<evidence type="ECO:0007829" key="30">
    <source>
        <dbReference type="PDB" id="6Y6Q"/>
    </source>
</evidence>
<evidence type="ECO:0007829" key="31">
    <source>
        <dbReference type="PDB" id="6YRQ"/>
    </source>
</evidence>
<gene>
    <name type="primary">GP</name>
    <name evidence="17" type="ORF">ADT63_77597gpM</name>
    <name evidence="18" type="ORF">ADT63_77598gpM</name>
</gene>
<reference key="1">
    <citation type="journal article" date="2002" name="J. Virol.">
        <title>Analysis of hantavirus genetic diversity in Argentina: S segment-derived phylogeny.</title>
        <authorList>
            <person name="Bohlman M.C."/>
            <person name="Morzunov S.P."/>
            <person name="Meissner J."/>
            <person name="Taylor M.B."/>
            <person name="Ishibashi K."/>
            <person name="Rowe J."/>
            <person name="Levis S."/>
            <person name="Enria D."/>
            <person name="St Jeor S.C."/>
        </authorList>
    </citation>
    <scope>NUCLEOTIDE SEQUENCE [GENOMIC RNA]</scope>
    <source>
        <strain>Chile-9717869</strain>
    </source>
</reference>
<reference key="2">
    <citation type="journal article" date="2002" name="Virus Res.">
        <title>Complete nucleotide sequence of a Chilean hantavirus.</title>
        <authorList>
            <person name="Meissner J.D."/>
            <person name="Rowe J.E."/>
            <person name="Borucki M.K."/>
            <person name="St Jeor S.C."/>
        </authorList>
    </citation>
    <scope>NUCLEOTIDE SEQUENCE [GENOMIC RNA]</scope>
    <source>
        <strain>Chile-9717869</strain>
    </source>
</reference>
<reference key="3">
    <citation type="journal article" date="2002" name="J. Gen. Virol.">
        <title>Complete nucleotide sequence of the M RNA segment of Andes virus and analysis of the variability of the termini of the virus S, M and L RNA segments.</title>
        <authorList>
            <person name="Padula P.J."/>
            <person name="Sanchez A.J."/>
            <person name="Edelstein A."/>
            <person name="Nichol S.T."/>
        </authorList>
    </citation>
    <scope>NUCLEOTIDE SEQUENCE [GENOMIC RNA]</scope>
    <source>
        <strain>AH-1</strain>
    </source>
</reference>
<reference key="4">
    <citation type="submission" date="2019-06" db="EMBL/GenBank/DDBJ databases">
        <authorList>
            <person name="Tan G."/>
            <person name="Fedorova N."/>
            <person name="Amedeo P."/>
            <person name="Hu L."/>
            <person name="Christensen J."/>
            <person name="Miller J."/>
            <person name="Durbin A."/>
            <person name="Williams T."/>
            <person name="Cadiz C."/>
            <person name="Duehr J."/>
            <person name="Krammer F."/>
        </authorList>
    </citation>
    <scope>NUCLEOTIDE SEQUENCE [GENOMIC RNA]</scope>
    <source>
        <strain evidence="17">Isolate ANDV/Oligoryzomys longicaudatus/CHL/9717869_01/2002</strain>
        <strain evidence="18">Isolate ANDV/Oligoryzomys longicaudatus/CHL/9717869_02/2002</strain>
    </source>
</reference>
<reference key="5">
    <citation type="submission" date="2020-09" db="EMBL/GenBank/DDBJ databases">
        <title>Differential pathogenesis between Andes virus strains CHI-7913 and Chile-9717869 in Syrian hamsters.</title>
        <authorList>
            <person name="Warner B.M."/>
            <person name="Sloan A."/>
            <person name="Deschambault Y."/>
            <person name="Dowhanik S."/>
            <person name="Tierney K."/>
            <person name="Audet J."/>
            <person name="Stein D.R."/>
            <person name="Lung O."/>
            <person name="Buchanan C."/>
            <person name="Sroga P."/>
            <person name="Griffin B.D."/>
            <person name="Siragam V."/>
            <person name="Frost K.L."/>
            <person name="Booth S."/>
            <person name="Kobasa D."/>
            <person name="Safronetz D."/>
        </authorList>
    </citation>
    <scope>NUCLEOTIDE SEQUENCE [GENOMIC RNA]</scope>
    <source>
        <strain evidence="19">Chile-9717869</strain>
    </source>
</reference>
<reference key="6">
    <citation type="journal article" date="2006" name="J. Virol.">
        <title>The pathogenic NY-1 hantavirus G1 cytoplasmic tail inhibits RIG-I- and TBK-1-directed interferon responses.</title>
        <authorList>
            <person name="Alff P.J."/>
            <person name="Gavrilovskaya I.N."/>
            <person name="Gorbunova E."/>
            <person name="Endriss K."/>
            <person name="Chong Y."/>
            <person name="Geimonen E."/>
            <person name="Sen N."/>
            <person name="Reich N.C."/>
            <person name="Mackow E.R."/>
        </authorList>
    </citation>
    <scope>DOMAIN (GLYCOPROTEIN N)</scope>
    <scope>FUNCTION (GLYCOPROTEIN N)</scope>
</reference>
<reference key="7">
    <citation type="journal article" date="2014" name="J. Virol.">
        <title>Hantavirus GnT elements mediate TRAF3 binding and inhibit RIG-I/TBK1-directed beta interferon transcription by blocking IRF3 phosphorylation.</title>
        <authorList>
            <person name="Matthys V.S."/>
            <person name="Cimica V."/>
            <person name="Dalrymple N.A."/>
            <person name="Glennon N.B."/>
            <person name="Bianco C."/>
            <person name="Mackow E.R."/>
        </authorList>
    </citation>
    <scope>FUNCTION (GLYCOPROTEIN N)</scope>
    <scope>INTERACTION WITH HOST TRAF3 (GLYCOPROTEIN N)</scope>
</reference>
<reference key="8">
    <citation type="journal article" date="2014" name="Viruses">
        <title>Hantavirus Gn and Gc envelope glycoproteins: key structural units for virus cell entry and virus assembly.</title>
        <authorList>
            <person name="Cifuentes-Munoz N."/>
            <person name="Salazar-Quiroz N."/>
            <person name="Tischler N.D."/>
        </authorList>
    </citation>
    <scope>REVIEW</scope>
</reference>
<reference key="9">
    <citation type="journal article" date="2015" name="J. Gen. Virol.">
        <title>Acidification triggers Andes hantavirus membrane fusion and rearrangement of Gc into a stable post-fusion homotrimer.</title>
        <authorList>
            <person name="Acuna R."/>
            <person name="Bignon E.A."/>
            <person name="Mancini R."/>
            <person name="Lozach P.Y."/>
            <person name="Tischler N.D."/>
        </authorList>
    </citation>
    <scope>SUBUNIT (GLYCOPROTEIN C)</scope>
</reference>
<reference key="10">
    <citation type="journal article" date="2016" name="PLoS Negl. Trop. Dis.">
        <title>Inhibition of the Hantavirus Fusion Process by Predicted Domain III and Stem Peptides from Glycoprotein Gc.</title>
        <authorList>
            <person name="Barriga G.P."/>
            <person name="Villalon-Letelier F."/>
            <person name="Marquez C.L."/>
            <person name="Bignon E.A."/>
            <person name="Acuna R."/>
            <person name="Ross B.H."/>
            <person name="Monasterio O."/>
            <person name="Mardones G.A."/>
            <person name="Vidal S.E."/>
            <person name="Tischler N.D."/>
        </authorList>
    </citation>
    <scope>FUNCTION (GLYCOPROTEIN C)</scope>
</reference>
<reference key="11">
    <citation type="journal article" date="2019" name="Elife">
        <title>Molecular organization and dynamics of the fusion protein Gc at the hantavirus surface.</title>
        <authorList>
            <person name="Bignon E.A."/>
            <person name="Albornoz A."/>
            <person name="Guardado-Calvo P."/>
            <person name="Rey F.A."/>
            <person name="Tischler N.D."/>
        </authorList>
    </citation>
    <scope>SUBUNIT (GLYCOPROTEIN C)</scope>
    <scope>FUNCTION (GLYCOPROTEIN C)</scope>
</reference>
<reference evidence="20" key="12">
    <citation type="journal article" date="2009" name="J. Biol. Chem.">
        <title>The Hantavirus Glycoprotein G1 Tail Contains Dual CCHC-type Classical Zinc Fingers.</title>
        <authorList>
            <person name="Estrada D.F."/>
            <person name="Boudreaux D.M."/>
            <person name="Zhong D."/>
            <person name="St Jeor S.C."/>
            <person name="De Guzman R.N."/>
        </authorList>
    </citation>
    <scope>STRUCTURE BY NMR OF 543-599 IN COMPLEX WITH ZINC</scope>
    <scope>DOMAIN (GLYCOPROTEIN N)</scope>
    <source>
        <strain>23</strain>
    </source>
</reference>
<reference key="13">
    <citation type="journal article" date="2011" name="Front. Microbiol.">
        <title>The Structure of the Hantavirus Zinc Finger Domain is Conserved and Represents the Only Natively Folded Region of the Gn Cytoplasmic Tail.</title>
        <authorList>
            <person name="Estrada D.F."/>
            <person name="Conner M."/>
            <person name="Jeor S.C."/>
            <person name="Guzman R.N."/>
        </authorList>
    </citation>
    <scope>STRUCTURE BY NMR OF 534-610</scope>
    <scope>DOMAIN (GLYCOPROTEIN N)</scope>
</reference>
<reference evidence="21 22 23 24 25 26" key="14">
    <citation type="journal article" date="2020" name="Cell">
        <title>The Hantavirus Surface Glycoprotein Lattice and Its Fusion Control Mechanism.</title>
        <authorList>
            <person name="Serris A."/>
            <person name="Stass R."/>
            <person name="Bignon E.A."/>
            <person name="Muena N.A."/>
            <person name="Manuguerra J.C."/>
            <person name="Jangra R.K."/>
            <person name="Li S."/>
            <person name="Chandran K."/>
            <person name="Tischler N.D."/>
            <person name="Huiskonen J.T."/>
            <person name="Rey F.A."/>
            <person name="Guardado-Calvo P."/>
        </authorList>
    </citation>
    <scope>X-RAY CRYSTALLOGRAPHY (1.90 ANGSTROMS) OF 375-484</scope>
    <scope>DISULFIDE BONDS</scope>
    <scope>SUBUNIT (GLYCOPROTEIN N)</scope>
    <scope>SUBUNIT (GLYCOPROTEIN C)</scope>
</reference>
<comment type="function">
    <molecule>Glycoprotein N</molecule>
    <text evidence="1 3 8 11 16">Forms homotetramers with glycoprotein C at the surface of the virion (By similarity). Attaches the virion to host cell receptors including integrin ITGAV/ITGB3 (By similarity). This attachment induces virion internalization possibly through clathrin-dependent endocytosis and dynamin-independent macropinocytosis (Probable). Mediates the assembly and budding of infectious virus particles through its interaction with the nucleocapsid protein and the viral genome (By similarity). May dysregulate normal immune and endothelial cell responses through an ITAM motif (By similarity). Translocates to mitochondria, binds to host TUFM and recruits MAP1LC3B (By similarity). These interactions induce mitochondrial autophagy and therefore destruction of host MAVS leading to inhibition of type I interferon (IFN) responses (By similarity). Concomitant breakdown of glycoprotein N is apparently prevented by the nucleoprotein that may inhibit Gn-stimulated autophagosome-lysosome fusion (By similarity). Interacts with the viral genomic RNA (By similarity). Inhibits the host RIG-I/TBK1 pathway by disrupting the formation of TBK1-TRAF3 complexes and downstream signaling responses required for IFN-beta transcription (PubMed:16973572, PubMed:24390324).</text>
</comment>
<comment type="function">
    <molecule>Glycoprotein C</molecule>
    <text evidence="1 13 14">Forms homotetramers with glycoprotein N at the surface of the virion. Attaches the virion to host cell receptors including integrin ITGAV/ITGB3. This attachment induces virion internalization predominantly through clathrin-dependent endocytosis (By similarity). Class II fusion protein that promotes fusion of viral membrane with host endosomal membrane after endocytosis of the virion (PubMed:27414047, PubMed:31180319).</text>
</comment>
<comment type="subunit">
    <molecule>Glycoprotein N</molecule>
    <text evidence="1 2 11 15">Homodimer (PubMed:32937107). Homotetramer; forms heterotetrameric Gn-Gc spikes in the pre-fusion conformation (PubMed:32937107). Interacts (via C-terminus) with the nucleoprotein (By similarity). Interacts with host TUFM; this interaction contributes to the virus-induced degradation of mitochondria by autophagy, which leads to degradation of host MAVS and inhibition of type I interferon (IFN) responses (By similarity). Interacts with host MAP1LC3B; this interaction contributes to the virus-induced degradation of mitochondria by autophagy, which leads to degradation of host MAVS and inhibition of type I interferon (IFN) responses (By similarity). Interacts (via C-terminus) with host TRAF3; this interaction inhibits the formation of TRAF3-TBK1 complexes (PubMed:24390324).</text>
</comment>
<comment type="subunit">
    <molecule>Glycoprotein C</molecule>
    <text evidence="3 12 14 15">Homodimer (PubMed:31180319, PubMed:32937107). Homotetramer; forms heterotetrameric Gn-Gc spikes in the pre-fusion conformation (PubMed:32937107). Homotrimer; forms homotrimer in the post-fusion conformation at acidic pH (PubMed:26310672, PubMed:32937107). Interacts (via C-terminus) with the nucleoprotein (By similarity).</text>
</comment>
<comment type="subcellular location">
    <molecule>Glycoprotein N</molecule>
    <subcellularLocation>
        <location evidence="1">Virion membrane</location>
        <topology evidence="16">Multi-pass membrane protein</topology>
    </subcellularLocation>
    <subcellularLocation>
        <location evidence="1">Host cell surface</location>
    </subcellularLocation>
    <subcellularLocation>
        <location evidence="1">Host Golgi apparatus membrane</location>
        <topology evidence="1">Multi-pass membrane protein</topology>
    </subcellularLocation>
    <subcellularLocation>
        <location evidence="1">Host endoplasmic reticulum membrane</location>
        <topology evidence="1">Multi-pass membrane protein</topology>
    </subcellularLocation>
    <subcellularLocation>
        <location evidence="1">Host mitochondrion</location>
    </subcellularLocation>
    <text evidence="3">Interaction between glycoprotein N and glycoprotein C is essential for proper targeting of glycoprotein N to the host Golgi complex, where virion budding occurs.</text>
</comment>
<comment type="subcellular location">
    <molecule>Glycoprotein C</molecule>
    <subcellularLocation>
        <location evidence="1">Virion membrane</location>
        <topology evidence="16">Single-pass type I membrane protein</topology>
    </subcellularLocation>
    <subcellularLocation>
        <location evidence="1">Host cell surface</location>
    </subcellularLocation>
    <subcellularLocation>
        <location evidence="1">Host Golgi apparatus membrane</location>
        <topology evidence="1">Single-pass type I membrane protein</topology>
    </subcellularLocation>
    <subcellularLocation>
        <location evidence="1">Host endoplasmic reticulum membrane</location>
        <topology evidence="1">Single-pass type I membrane protein</topology>
    </subcellularLocation>
    <text evidence="1 16">Budding probably takes place at the host Golgi (Probable). Glycoprotein C cytoplasmic tail is important for efficient Golgi localization (By similarity).</text>
</comment>
<comment type="domain">
    <molecule>Glycoprotein N</molecule>
    <text evidence="1 3 8 9 10">The YxxL motif at the C-terminus is indispensable for the interaction with MAP1LC3B and for the Gn-mediated induction of mitochondrial autophagy (By similarity). The cytoplasmic tail is involved in the inhibition of the host innate immune response (PubMed:16973572). The C-terminus of the cytoplasmic tail is involved in binding to the viral genome and the nucleocapsid (By similarity). Contains 2 contiguous zinc-fingers (PubMed:19179334, PubMed:22203819).</text>
</comment>
<comment type="domain">
    <molecule>Glycoprotein C</molecule>
    <text evidence="3">The C-terminus is necessary for proper localization in the Golgi (By similarity). The cytoplasmic tail is involved in binding to the nucleocapsid (By similarity).</text>
</comment>
<comment type="PTM">
    <molecule>Envelopment polyprotein</molecule>
    <text evidence="1">Envelope polyprotein precursor is quickly cleaved in vivo just after synthesis, presumably by host signal peptidase.</text>
</comment>
<comment type="similarity">
    <text evidence="16">Belongs to the hantavirus envelope glycoprotein family.</text>
</comment>
<proteinExistence type="evidence at protein level"/>
<name>GP_ANDV</name>
<sequence>MEGWYLVVLGVCYTLTLAMPKTIYELKMECPHTVGLGQGYIIGSTELGLISIEAASDIKLESSCNFDLHTTSMAQKSFTQVEWRKKSDTTDTTNAASTTFEAQTKTVNLRGTCILAPELYDTLKKVKKTVLCYDLTCNQTHCQPTVYLIAPVLTCMSIRSCMASVFTSRIQVIYEKTHCVTGQLIEGQCFNPAHTLTLSQPAHTYDTVTLPISCFFTPKKSEQLKVIKTFEGILTKTGCTENALQGYYVCFLGSHSEPLIVPSLEDIRSAEVVSRMLVHPRGEDHDAIQNSQSHLRIVGPITAKVPSTSSTDTLKGTAFAGVPMYSSLSTLVRNADPEFVFSPGIVPESNHSTCDKKTVPITWTGYLPISGEMEKVTGCTVFCTLAGPGASCEAYSENGIFNISSPTCLVNKVQRFRGSEQKINFICQRVDQDVVVYCNGQKKVILTKTLVIGQCIYTFTSLFSLMPDVAHSLAVELCVPGLHGWATVMLLSTFCFGWVLIPAVTLIILKCLRVLTFSCSHYTNESKFKFILEKVKIEYQKTMGSMVCDVCHHECETAKELESHRQSCINGQCPYCMTITEATESALQAHYSICKLTGRFQEALKKSLKKPEVKKGCYRTLGVFRYKSRCYVGLVWCLLLTCEIVIWAASAETPLMESGWSDTAHGVGEIPMKTDLELDFSLPSSSSYSYRRKLTNPANKEESIPFHFQMEKQVIHAEIQPLGHWMDATFNIKTAFHCYGACQKYSYPWQTSKCFFEKDYQYETGWGCNPGDCPGVGTGCTACGVYLDKLKSVGKAYKIISLKYTRKVCIQLGTEQTCKHIDANDCLVTPSVKVCIVGTVSKLQPSDTLLFLGPLEQGGIILKQWCTTSCAFGDPGDIMSTPSGMRCPEHTGSFRKICGFATTPVCEYQGNTISGYKRMMATKDSFQSFNLTEPHITTNKLEWIDPDGNTRDHVNLVLNRDVSFQDLSDNPCKVDLHTQAIEGAWGSGVGFTLTCTVGLTECPSFMTSIKACDLAMCYGSTVTNLARGSNTVKVVGKGGHSGSSFKCCHDTDCSSEGLLASAPHLERVTGFNQIDSDKVYDDGAPPCTFKCWFTKSGEWLLGILNGNWIVVVVLVVILILSIIMFSVLCPRRGHKKTV</sequence>
<accession>Q9E006</accession>
<accession>Q99BV0</accession>
<feature type="signal peptide" evidence="6">
    <location>
        <begin position="1"/>
        <end position="18"/>
    </location>
</feature>
<feature type="chain" id="PRO_0000455206" description="Envelopment polyprotein">
    <location>
        <begin position="19"/>
        <end position="1138"/>
    </location>
</feature>
<feature type="chain" id="PRO_0000455207" description="Glycoprotein N">
    <location>
        <begin position="19"/>
        <end position="651"/>
    </location>
</feature>
<feature type="chain" id="PRO_0000455208" description="Glycoprotein C">
    <location>
        <begin position="652"/>
        <end position="1138"/>
    </location>
</feature>
<feature type="topological domain" description="Lumenal" evidence="6">
    <location>
        <begin position="19"/>
        <end position="487"/>
    </location>
</feature>
<feature type="transmembrane region" description="Helical" evidence="6">
    <location>
        <begin position="488"/>
        <end position="508"/>
    </location>
</feature>
<feature type="topological domain" description="Cytoplasmic" evidence="6">
    <location>
        <begin position="509"/>
        <end position="630"/>
    </location>
</feature>
<feature type="transmembrane region" description="Helical" evidence="6">
    <location>
        <begin position="631"/>
        <end position="651"/>
    </location>
</feature>
<feature type="topological domain" description="Lumenal" evidence="6">
    <location>
        <begin position="652"/>
        <end position="1107"/>
    </location>
</feature>
<feature type="transmembrane region" description="Helical" evidence="6">
    <location>
        <begin position="1108"/>
        <end position="1128"/>
    </location>
</feature>
<feature type="topological domain" description="Cytoplasmic" evidence="6">
    <location>
        <begin position="1129"/>
        <end position="1138"/>
    </location>
</feature>
<feature type="domain" description="ITAM" evidence="7">
    <location>
        <begin position="614"/>
        <end position="637"/>
    </location>
</feature>
<feature type="zinc finger region" description="CCHC-type 1" evidence="9 10">
    <location>
        <begin position="548"/>
        <end position="568"/>
    </location>
</feature>
<feature type="zinc finger region" description="CCHC-type 2" evidence="9 10">
    <location>
        <begin position="573"/>
        <end position="594"/>
    </location>
</feature>
<feature type="region of interest" description="Binding to the ribonucleoprotein" evidence="10">
    <location>
        <begin position="519"/>
        <end position="536"/>
    </location>
</feature>
<feature type="region of interest" description="Binding to the ribonucleoprotein" evidence="3">
    <location>
        <begin position="591"/>
        <end position="608"/>
    </location>
</feature>
<feature type="region of interest" description="Binding to the ribonucleoprotein" evidence="10">
    <location>
        <begin position="595"/>
        <end position="606"/>
    </location>
</feature>
<feature type="region of interest" description="Interaction with host TRAF3" evidence="5">
    <location>
        <begin position="610"/>
        <end position="637"/>
    </location>
</feature>
<feature type="region of interest" description="Binding to the ribonucleoprotein" evidence="3">
    <location>
        <begin position="614"/>
        <end position="628"/>
    </location>
</feature>
<feature type="region of interest" description="Fusion loop" evidence="4">
    <location>
        <begin position="760"/>
        <end position="780"/>
    </location>
</feature>
<feature type="region of interest" description="Binding to the ribonucleoprotein" evidence="3">
    <location>
        <begin position="1124"/>
        <end position="1138"/>
    </location>
</feature>
<feature type="short sequence motif" description="YxxL" evidence="1">
    <location>
        <begin position="618"/>
        <end position="621"/>
    </location>
</feature>
<feature type="site" description="Cleavage; by host signal peptidase" evidence="1">
    <location>
        <begin position="651"/>
        <end position="652"/>
    </location>
</feature>
<feature type="modified residue" description="Phosphotyrosine" evidence="7">
    <location>
        <position position="618"/>
    </location>
</feature>
<feature type="modified residue" description="Phosphotyrosine" evidence="7">
    <location>
        <position position="631"/>
    </location>
</feature>
<feature type="glycosylation site" description="N-linked (GlcNAc...) asparagine; by host" evidence="6">
    <location>
        <position position="138"/>
    </location>
</feature>
<feature type="glycosylation site" description="N-linked (GlcNAc...) asparagine; by host" evidence="6">
    <location>
        <position position="350"/>
    </location>
</feature>
<feature type="glycosylation site" description="N-linked (GlcNAc...) asparagine; by host" evidence="6">
    <location>
        <position position="402"/>
    </location>
</feature>
<feature type="glycosylation site" description="N-linked (GlcNAc...) asparagine; by host" evidence="1">
    <location>
        <position position="930"/>
    </location>
</feature>
<feature type="disulfide bond" evidence="15">
    <location>
        <begin position="30"/>
        <end position="155"/>
    </location>
</feature>
<feature type="disulfide bond" evidence="15">
    <location>
        <begin position="64"/>
        <end position="161"/>
    </location>
</feature>
<feature type="disulfide bond" evidence="15">
    <location>
        <begin position="113"/>
        <end position="132"/>
    </location>
</feature>
<feature type="disulfide bond" evidence="15">
    <location>
        <begin position="137"/>
        <end position="142"/>
    </location>
</feature>
<feature type="disulfide bond" evidence="15">
    <location>
        <begin position="179"/>
        <end position="189"/>
    </location>
</feature>
<feature type="disulfide bond" evidence="15">
    <location>
        <begin position="214"/>
        <end position="250"/>
    </location>
</feature>
<feature type="disulfide bond" evidence="15">
    <location>
        <begin position="239"/>
        <end position="354"/>
    </location>
</feature>
<feature type="disulfide bond" evidence="15">
    <location>
        <begin position="379"/>
        <end position="438"/>
    </location>
</feature>
<feature type="disulfide bond" evidence="15">
    <location>
        <begin position="383"/>
        <end position="392"/>
    </location>
</feature>
<feature type="disulfide bond" evidence="15">
    <location>
        <begin position="408"/>
        <end position="427"/>
    </location>
</feature>
<feature type="disulfide bond" evidence="15">
    <location>
        <begin position="455"/>
        <end position="478"/>
    </location>
</feature>
<feature type="disulfide bond" evidence="15">
    <location>
        <begin position="738"/>
        <end position="773"/>
    </location>
</feature>
<feature type="disulfide bond" evidence="15">
    <location>
        <begin position="742"/>
        <end position="780"/>
    </location>
</feature>
<feature type="disulfide bond" evidence="15">
    <location>
        <begin position="754"/>
        <end position="887"/>
    </location>
</feature>
<feature type="disulfide bond" evidence="15">
    <location>
        <begin position="768"/>
        <end position="898"/>
    </location>
</feature>
<feature type="disulfide bond" evidence="15">
    <location>
        <begin position="783"/>
        <end position="906"/>
    </location>
</feature>
<feature type="disulfide bond" evidence="15">
    <location>
        <begin position="809"/>
        <end position="818"/>
    </location>
</feature>
<feature type="disulfide bond" evidence="15">
    <location>
        <begin position="826"/>
        <end position="835"/>
    </location>
</feature>
<feature type="disulfide bond" evidence="15">
    <location>
        <begin position="866"/>
        <end position="870"/>
    </location>
</feature>
<feature type="disulfide bond" evidence="15">
    <location>
        <begin position="972"/>
        <end position="1002"/>
    </location>
</feature>
<feature type="disulfide bond" evidence="15">
    <location>
        <begin position="995"/>
        <end position="1047"/>
    </location>
</feature>
<feature type="disulfide bond" evidence="15">
    <location>
        <begin position="1012"/>
        <end position="1017"/>
    </location>
</feature>
<feature type="disulfide bond" evidence="15">
    <location>
        <begin position="1048"/>
        <end position="1053"/>
    </location>
</feature>
<feature type="disulfide bond" evidence="15">
    <location>
        <begin position="1087"/>
        <end position="1091"/>
    </location>
</feature>
<feature type="sequence variant" description="In strain: AH-1.">
    <original>V</original>
    <variation>A</variation>
    <location>
        <position position="8"/>
    </location>
</feature>
<feature type="sequence variant" description="In strain: AH-1.">
    <original>R</original>
    <variation>I</variation>
    <location>
        <position position="281"/>
    </location>
</feature>
<feature type="sequence variant" description="In strain: AH-1.">
    <original>H</original>
    <variation>Y</variation>
    <location>
        <position position="294"/>
    </location>
</feature>
<feature type="sequence variant" description="In strain: AH-1.">
    <original>T</original>
    <variation>I</variation>
    <location>
        <position position="317"/>
    </location>
</feature>
<feature type="sequence variant" description="In strain: AH-1.">
    <original>L</original>
    <variation>F</variation>
    <location>
        <position position="328"/>
    </location>
</feature>
<feature type="sequence variant" description="In strain: AH-1.">
    <original>V</original>
    <variation>I</variation>
    <location>
        <position position="346"/>
    </location>
</feature>
<feature type="sequence variant" description="In strain: AH-1.">
    <original>T</original>
    <variation>V</variation>
    <location>
        <position position="353"/>
    </location>
</feature>
<feature type="sequence variant" description="In strain: AH-1.">
    <original>I</original>
    <variation>V</variation>
    <location>
        <position position="537"/>
    </location>
</feature>
<feature type="sequence variant" description="In strain: AH-1.">
    <original>I</original>
    <variation>V</variation>
    <location>
        <position position="913"/>
    </location>
</feature>
<feature type="sequence variant" description="In strain: AH-1.">
    <original>T</original>
    <variation>A</variation>
    <location>
        <position position="1023"/>
    </location>
</feature>
<feature type="strand" evidence="29">
    <location>
        <begin position="26"/>
        <end position="30"/>
    </location>
</feature>
<feature type="strand" evidence="29">
    <location>
        <begin position="40"/>
        <end position="46"/>
    </location>
</feature>
<feature type="helix" evidence="29">
    <location>
        <begin position="52"/>
        <end position="55"/>
    </location>
</feature>
<feature type="helix" evidence="29">
    <location>
        <begin position="70"/>
        <end position="73"/>
    </location>
</feature>
<feature type="strand" evidence="29">
    <location>
        <begin position="75"/>
        <end position="85"/>
    </location>
</feature>
<feature type="strand" evidence="29">
    <location>
        <begin position="91"/>
        <end position="94"/>
    </location>
</feature>
<feature type="strand" evidence="29">
    <location>
        <begin position="99"/>
        <end position="113"/>
    </location>
</feature>
<feature type="turn" evidence="28">
    <location>
        <begin position="118"/>
        <end position="122"/>
    </location>
</feature>
<feature type="strand" evidence="29">
    <location>
        <begin position="129"/>
        <end position="137"/>
    </location>
</feature>
<feature type="strand" evidence="29">
    <location>
        <begin position="139"/>
        <end position="151"/>
    </location>
</feature>
<feature type="helix" evidence="29">
    <location>
        <begin position="152"/>
        <end position="156"/>
    </location>
</feature>
<feature type="strand" evidence="29">
    <location>
        <begin position="159"/>
        <end position="165"/>
    </location>
</feature>
<feature type="strand" evidence="29">
    <location>
        <begin position="168"/>
        <end position="176"/>
    </location>
</feature>
<feature type="strand" evidence="29">
    <location>
        <begin position="183"/>
        <end position="185"/>
    </location>
</feature>
<feature type="strand" evidence="29">
    <location>
        <begin position="188"/>
        <end position="192"/>
    </location>
</feature>
<feature type="helix" evidence="29">
    <location>
        <begin position="194"/>
        <end position="196"/>
    </location>
</feature>
<feature type="turn" evidence="29">
    <location>
        <begin position="197"/>
        <end position="199"/>
    </location>
</feature>
<feature type="turn" evidence="29">
    <location>
        <begin position="202"/>
        <end position="204"/>
    </location>
</feature>
<feature type="strand" evidence="29">
    <location>
        <begin position="205"/>
        <end position="218"/>
    </location>
</feature>
<feature type="helix" evidence="29">
    <location>
        <begin position="222"/>
        <end position="224"/>
    </location>
</feature>
<feature type="helix" evidence="29">
    <location>
        <begin position="226"/>
        <end position="233"/>
    </location>
</feature>
<feature type="strand" evidence="29">
    <location>
        <begin position="246"/>
        <end position="252"/>
    </location>
</feature>
<feature type="strand" evidence="29">
    <location>
        <begin position="259"/>
        <end position="262"/>
    </location>
</feature>
<feature type="helix" evidence="29">
    <location>
        <begin position="267"/>
        <end position="278"/>
    </location>
</feature>
<feature type="helix" evidence="28">
    <location>
        <begin position="288"/>
        <end position="290"/>
    </location>
</feature>
<feature type="strand" evidence="29">
    <location>
        <begin position="291"/>
        <end position="303"/>
    </location>
</feature>
<feature type="strand" evidence="29">
    <location>
        <begin position="314"/>
        <end position="322"/>
    </location>
</feature>
<feature type="strand" evidence="29">
    <location>
        <begin position="328"/>
        <end position="336"/>
    </location>
</feature>
<feature type="strand" evidence="29">
    <location>
        <begin position="339"/>
        <end position="341"/>
    </location>
</feature>
<feature type="strand" evidence="29">
    <location>
        <begin position="345"/>
        <end position="347"/>
    </location>
</feature>
<feature type="strand" evidence="29">
    <location>
        <begin position="358"/>
        <end position="373"/>
    </location>
</feature>
<feature type="strand" evidence="31">
    <location>
        <begin position="380"/>
        <end position="386"/>
    </location>
</feature>
<feature type="strand" evidence="31">
    <location>
        <begin position="389"/>
        <end position="400"/>
    </location>
</feature>
<feature type="strand" evidence="31">
    <location>
        <begin position="406"/>
        <end position="409"/>
    </location>
</feature>
<feature type="strand" evidence="31">
    <location>
        <begin position="420"/>
        <end position="428"/>
    </location>
</feature>
<feature type="strand" evidence="31">
    <location>
        <begin position="434"/>
        <end position="438"/>
    </location>
</feature>
<feature type="strand" evidence="31">
    <location>
        <begin position="441"/>
        <end position="445"/>
    </location>
</feature>
<feature type="helix" evidence="31">
    <location>
        <begin position="447"/>
        <end position="462"/>
    </location>
</feature>
<feature type="turn" evidence="31">
    <location>
        <begin position="463"/>
        <end position="465"/>
    </location>
</feature>
<feature type="turn" evidence="31">
    <location>
        <begin position="467"/>
        <end position="469"/>
    </location>
</feature>
<feature type="helix" evidence="31">
    <location>
        <begin position="470"/>
        <end position="478"/>
    </location>
</feature>
<feature type="turn" evidence="27">
    <location>
        <begin position="549"/>
        <end position="551"/>
    </location>
</feature>
<feature type="turn" evidence="27">
    <location>
        <begin position="558"/>
        <end position="560"/>
    </location>
</feature>
<feature type="helix" evidence="27">
    <location>
        <begin position="561"/>
        <end position="568"/>
    </location>
</feature>
<feature type="turn" evidence="27">
    <location>
        <begin position="569"/>
        <end position="571"/>
    </location>
</feature>
<feature type="turn" evidence="27">
    <location>
        <begin position="574"/>
        <end position="576"/>
    </location>
</feature>
<feature type="helix" evidence="27">
    <location>
        <begin position="584"/>
        <end position="591"/>
    </location>
</feature>
<feature type="helix" evidence="27">
    <location>
        <begin position="596"/>
        <end position="598"/>
    </location>
</feature>
<feature type="helix" evidence="29">
    <location>
        <begin position="671"/>
        <end position="673"/>
    </location>
</feature>
<feature type="strand" evidence="29">
    <location>
        <begin position="674"/>
        <end position="683"/>
    </location>
</feature>
<feature type="strand" evidence="29">
    <location>
        <begin position="688"/>
        <end position="694"/>
    </location>
</feature>
<feature type="strand" evidence="29">
    <location>
        <begin position="704"/>
        <end position="710"/>
    </location>
</feature>
<feature type="strand" evidence="29">
    <location>
        <begin position="714"/>
        <end position="741"/>
    </location>
</feature>
<feature type="helix" evidence="29">
    <location>
        <begin position="748"/>
        <end position="751"/>
    </location>
</feature>
<feature type="strand" evidence="29">
    <location>
        <begin position="753"/>
        <end position="760"/>
    </location>
</feature>
<feature type="helix" evidence="29">
    <location>
        <begin position="764"/>
        <end position="766"/>
    </location>
</feature>
<feature type="strand" evidence="29">
    <location>
        <begin position="771"/>
        <end position="776"/>
    </location>
</feature>
<feature type="strand" evidence="29">
    <location>
        <begin position="781"/>
        <end position="812"/>
    </location>
</feature>
<feature type="strand" evidence="29">
    <location>
        <begin position="815"/>
        <end position="822"/>
    </location>
</feature>
<feature type="strand" evidence="29">
    <location>
        <begin position="825"/>
        <end position="828"/>
    </location>
</feature>
<feature type="strand" evidence="29">
    <location>
        <begin position="830"/>
        <end position="837"/>
    </location>
</feature>
<feature type="strand" evidence="29">
    <location>
        <begin position="848"/>
        <end position="853"/>
    </location>
</feature>
<feature type="helix" evidence="29">
    <location>
        <begin position="855"/>
        <end position="857"/>
    </location>
</feature>
<feature type="strand" evidence="29">
    <location>
        <begin position="859"/>
        <end position="863"/>
    </location>
</feature>
<feature type="strand" evidence="30">
    <location>
        <begin position="867"/>
        <end position="869"/>
    </location>
</feature>
<feature type="strand" evidence="29">
    <location>
        <begin position="877"/>
        <end position="881"/>
    </location>
</feature>
<feature type="strand" evidence="29">
    <location>
        <begin position="884"/>
        <end position="886"/>
    </location>
</feature>
<feature type="strand" evidence="29">
    <location>
        <begin position="893"/>
        <end position="899"/>
    </location>
</feature>
<feature type="turn" evidence="29">
    <location>
        <begin position="900"/>
        <end position="902"/>
    </location>
</feature>
<feature type="strand" evidence="29">
    <location>
        <begin position="903"/>
        <end position="910"/>
    </location>
</feature>
<feature type="helix" evidence="29">
    <location>
        <begin position="915"/>
        <end position="920"/>
    </location>
</feature>
<feature type="helix" evidence="29">
    <location>
        <begin position="921"/>
        <end position="925"/>
    </location>
</feature>
<feature type="strand" evidence="29">
    <location>
        <begin position="926"/>
        <end position="929"/>
    </location>
</feature>
<feature type="strand" evidence="29">
    <location>
        <begin position="932"/>
        <end position="936"/>
    </location>
</feature>
<feature type="strand" evidence="29">
    <location>
        <begin position="938"/>
        <end position="944"/>
    </location>
</feature>
<feature type="strand" evidence="29">
    <location>
        <begin position="951"/>
        <end position="959"/>
    </location>
</feature>
<feature type="turn" evidence="28">
    <location>
        <begin position="964"/>
        <end position="966"/>
    </location>
</feature>
<feature type="strand" evidence="29">
    <location>
        <begin position="973"/>
        <end position="986"/>
    </location>
</feature>
<feature type="strand" evidence="29">
    <location>
        <begin position="991"/>
        <end position="1012"/>
    </location>
</feature>
<feature type="strand" evidence="29">
    <location>
        <begin position="1017"/>
        <end position="1036"/>
    </location>
</feature>
<feature type="strand" evidence="29">
    <location>
        <begin position="1044"/>
        <end position="1049"/>
    </location>
</feature>
<feature type="strand" evidence="28">
    <location>
        <begin position="1088"/>
        <end position="1090"/>
    </location>
</feature>
<organismHost>
    <name type="scientific">Abrothrix longipilis</name>
    <name type="common">Long-haired grass mouse</name>
    <name type="synonym">Akodon longipilis</name>
    <dbReference type="NCBI Taxonomy" id="29094"/>
</organismHost>
<organismHost>
    <name type="scientific">Homo sapiens</name>
    <name type="common">Human</name>
    <dbReference type="NCBI Taxonomy" id="9606"/>
</organismHost>
<organismHost>
    <name type="scientific">Loxodontomys micropus</name>
    <name type="common">Southern big-eared mouse</name>
    <name type="synonym">Auliscomys micropus</name>
    <dbReference type="NCBI Taxonomy" id="89122"/>
</organismHost>
<organismHost>
    <name type="scientific">Oligoryzomys chacoensis</name>
    <name type="common">Chacoan pygmy rice rat</name>
    <dbReference type="NCBI Taxonomy" id="37015"/>
</organismHost>
<organismHost>
    <name type="scientific">Oligoryzomys flavescens</name>
    <name type="common">yellow pygmy rice rat</name>
    <dbReference type="NCBI Taxonomy" id="218824"/>
</organismHost>
<organismHost>
    <name type="scientific">Oligoryzomys longicaudatus</name>
    <name type="common">Long-tailed pygmy rice rat</name>
    <dbReference type="NCBI Taxonomy" id="137207"/>
</organismHost>
<organismHost>
    <name type="scientific">Oligoryzomys sp.</name>
    <dbReference type="NCBI Taxonomy" id="37019"/>
</organismHost>
<organism>
    <name type="scientific">Andes orthohantavirus</name>
    <name type="common">ANDV</name>
    <name type="synonym">Andes virus</name>
    <dbReference type="NCBI Taxonomy" id="1980456"/>
    <lineage>
        <taxon>Viruses</taxon>
        <taxon>Riboviria</taxon>
        <taxon>Orthornavirae</taxon>
        <taxon>Negarnaviricota</taxon>
        <taxon>Polyploviricotina</taxon>
        <taxon>Ellioviricetes</taxon>
        <taxon>Bunyavirales</taxon>
        <taxon>Hantaviridae</taxon>
        <taxon>Mammantavirinae</taxon>
        <taxon>Orthohantavirus</taxon>
    </lineage>
</organism>